<protein>
    <recommendedName>
        <fullName evidence="4">DDRGK domain-containing protein 1</fullName>
    </recommendedName>
</protein>
<feature type="chain" id="PRO_0000391851" description="DDRGK domain-containing protein 1">
    <location>
        <begin position="1"/>
        <end position="313"/>
    </location>
</feature>
<feature type="transmembrane region" description="Helical" evidence="2">
    <location>
        <begin position="1"/>
        <end position="28"/>
    </location>
</feature>
<feature type="topological domain" description="Cytoplasmic" evidence="4">
    <location>
        <begin position="29"/>
        <end position="313"/>
    </location>
</feature>
<feature type="domain" description="PCI">
    <location>
        <begin position="228"/>
        <end position="272"/>
    </location>
</feature>
<feature type="region of interest" description="Mediates interaction with CDK5RAP3" evidence="2">
    <location>
        <begin position="1"/>
        <end position="113"/>
    </location>
</feature>
<feature type="region of interest" description="Disordered" evidence="3">
    <location>
        <begin position="40"/>
        <end position="88"/>
    </location>
</feature>
<feature type="region of interest" description="Mediates interaction with TRIP4" evidence="2">
    <location>
        <begin position="117"/>
        <end position="215"/>
    </location>
</feature>
<feature type="region of interest" description="Disordered" evidence="3">
    <location>
        <begin position="130"/>
        <end position="185"/>
    </location>
</feature>
<feature type="region of interest" description="Mediates interaction with UFL1" evidence="2">
    <location>
        <begin position="215"/>
        <end position="313"/>
    </location>
</feature>
<feature type="short sequence motif" description="UFM1-interacting motif (UFIM)" evidence="2">
    <location>
        <begin position="194"/>
        <end position="208"/>
    </location>
</feature>
<feature type="compositionally biased region" description="Low complexity" evidence="3">
    <location>
        <begin position="73"/>
        <end position="87"/>
    </location>
</feature>
<feature type="modified residue" description="Phosphoserine" evidence="2">
    <location>
        <position position="73"/>
    </location>
</feature>
<feature type="modified residue" description="Phosphoserine" evidence="2">
    <location>
        <position position="113"/>
    </location>
</feature>
<feature type="cross-link" description="Glycyl lysine isopeptide (Lys-Gly) (interchain with G-Cter in UFM1)" evidence="2">
    <location>
        <position position="266"/>
    </location>
</feature>
<keyword id="KW-0256">Endoplasmic reticulum</keyword>
<keyword id="KW-1017">Isopeptide bond</keyword>
<keyword id="KW-0472">Membrane</keyword>
<keyword id="KW-0597">Phosphoprotein</keyword>
<keyword id="KW-1185">Reference proteome</keyword>
<keyword id="KW-0812">Transmembrane</keyword>
<keyword id="KW-1133">Transmembrane helix</keyword>
<keyword id="KW-0832">Ubl conjugation</keyword>
<keyword id="KW-0833">Ubl conjugation pathway</keyword>
<proteinExistence type="evidence at transcript level"/>
<reference key="1">
    <citation type="submission" date="2006-05" db="EMBL/GenBank/DDBJ databases">
        <authorList>
            <consortium name="NIH - Mammalian Gene Collection (MGC) project"/>
        </authorList>
    </citation>
    <scope>NUCLEOTIDE SEQUENCE [LARGE SCALE MRNA]</scope>
    <source>
        <strain>Hereford</strain>
        <tissue>Hippocampus</tissue>
    </source>
</reference>
<name>DDRGK_BOVIN</name>
<dbReference type="EMBL" id="BC116112">
    <property type="protein sequence ID" value="AAI16113.1"/>
    <property type="molecule type" value="mRNA"/>
</dbReference>
<dbReference type="RefSeq" id="NP_001068966.1">
    <property type="nucleotide sequence ID" value="NM_001075498.1"/>
</dbReference>
<dbReference type="SMR" id="Q1LZB0"/>
<dbReference type="FunCoup" id="Q1LZB0">
    <property type="interactions" value="1295"/>
</dbReference>
<dbReference type="STRING" id="9913.ENSBTAP00000018273"/>
<dbReference type="PaxDb" id="9913-ENSBTAP00000018273"/>
<dbReference type="PeptideAtlas" id="Q1LZB0"/>
<dbReference type="GeneID" id="511144"/>
<dbReference type="KEGG" id="bta:511144"/>
<dbReference type="CTD" id="65992"/>
<dbReference type="eggNOG" id="KOG3054">
    <property type="taxonomic scope" value="Eukaryota"/>
</dbReference>
<dbReference type="InParanoid" id="Q1LZB0"/>
<dbReference type="OrthoDB" id="2285710at2759"/>
<dbReference type="Proteomes" id="UP000009136">
    <property type="component" value="Unplaced"/>
</dbReference>
<dbReference type="GO" id="GO:0005783">
    <property type="term" value="C:endoplasmic reticulum"/>
    <property type="evidence" value="ECO:0000250"/>
    <property type="project" value="UniProtKB"/>
</dbReference>
<dbReference type="GO" id="GO:0005789">
    <property type="term" value="C:endoplasmic reticulum membrane"/>
    <property type="evidence" value="ECO:0000250"/>
    <property type="project" value="UniProtKB"/>
</dbReference>
<dbReference type="GO" id="GO:0044389">
    <property type="term" value="F:ubiquitin-like protein ligase binding"/>
    <property type="evidence" value="ECO:0000250"/>
    <property type="project" value="UniProtKB"/>
</dbReference>
<dbReference type="GO" id="GO:0141185">
    <property type="term" value="F:UFM1-modified protein reader activity"/>
    <property type="evidence" value="ECO:0000250"/>
    <property type="project" value="UniProtKB"/>
</dbReference>
<dbReference type="GO" id="GO:0051216">
    <property type="term" value="P:cartilage development"/>
    <property type="evidence" value="ECO:0000318"/>
    <property type="project" value="GO_Central"/>
</dbReference>
<dbReference type="GO" id="GO:1903895">
    <property type="term" value="P:negative regulation of IRE1-mediated unfolded protein response"/>
    <property type="evidence" value="ECO:0000250"/>
    <property type="project" value="UniProtKB"/>
</dbReference>
<dbReference type="GO" id="GO:1903898">
    <property type="term" value="P:negative regulation of PERK-mediated unfolded protein response"/>
    <property type="evidence" value="ECO:0000250"/>
    <property type="project" value="UniProtKB"/>
</dbReference>
<dbReference type="GO" id="GO:1903721">
    <property type="term" value="P:positive regulation of I-kappaB phosphorylation"/>
    <property type="evidence" value="ECO:0000250"/>
    <property type="project" value="UniProtKB"/>
</dbReference>
<dbReference type="GO" id="GO:0051092">
    <property type="term" value="P:positive regulation of NF-kappaB transcription factor activity"/>
    <property type="evidence" value="ECO:0000250"/>
    <property type="project" value="UniProtKB"/>
</dbReference>
<dbReference type="GO" id="GO:1900100">
    <property type="term" value="P:positive regulation of plasma cell differentiation"/>
    <property type="evidence" value="ECO:0000250"/>
    <property type="project" value="UniProtKB"/>
</dbReference>
<dbReference type="GO" id="GO:1901800">
    <property type="term" value="P:positive regulation of proteasomal protein catabolic process"/>
    <property type="evidence" value="ECO:0000250"/>
    <property type="project" value="UniProtKB"/>
</dbReference>
<dbReference type="GO" id="GO:0140501">
    <property type="term" value="P:positive regulation of reticulophagy"/>
    <property type="evidence" value="ECO:0000250"/>
    <property type="project" value="UniProtKB"/>
</dbReference>
<dbReference type="GO" id="GO:1990592">
    <property type="term" value="P:protein K69-linked ufmylation"/>
    <property type="evidence" value="ECO:0000250"/>
    <property type="project" value="UniProtKB"/>
</dbReference>
<dbReference type="GO" id="GO:0070972">
    <property type="term" value="P:protein localization to endoplasmic reticulum"/>
    <property type="evidence" value="ECO:0000250"/>
    <property type="project" value="UniProtKB"/>
</dbReference>
<dbReference type="GO" id="GO:0071569">
    <property type="term" value="P:protein ufmylation"/>
    <property type="evidence" value="ECO:0000250"/>
    <property type="project" value="UniProtKB"/>
</dbReference>
<dbReference type="GO" id="GO:0033146">
    <property type="term" value="P:regulation of intracellular estrogen receptor signaling pathway"/>
    <property type="evidence" value="ECO:0000250"/>
    <property type="project" value="UniProtKB"/>
</dbReference>
<dbReference type="GO" id="GO:0031647">
    <property type="term" value="P:regulation of protein stability"/>
    <property type="evidence" value="ECO:0000250"/>
    <property type="project" value="UniProtKB"/>
</dbReference>
<dbReference type="GO" id="GO:0072344">
    <property type="term" value="P:rescue of stalled ribosome"/>
    <property type="evidence" value="ECO:0000250"/>
    <property type="project" value="UniProtKB"/>
</dbReference>
<dbReference type="GO" id="GO:0034976">
    <property type="term" value="P:response to endoplasmic reticulum stress"/>
    <property type="evidence" value="ECO:0000250"/>
    <property type="project" value="UniProtKB"/>
</dbReference>
<dbReference type="GO" id="GO:0061709">
    <property type="term" value="P:reticulophagy"/>
    <property type="evidence" value="ECO:0000250"/>
    <property type="project" value="UniProtKB"/>
</dbReference>
<dbReference type="GO" id="GO:0032790">
    <property type="term" value="P:ribosome disassembly"/>
    <property type="evidence" value="ECO:0000250"/>
    <property type="project" value="UniProtKB"/>
</dbReference>
<dbReference type="FunFam" id="1.10.10.10:FF:000143">
    <property type="entry name" value="DDRGK domain-containing protein 1"/>
    <property type="match status" value="1"/>
</dbReference>
<dbReference type="Gene3D" id="1.10.10.10">
    <property type="entry name" value="Winged helix-like DNA-binding domain superfamily/Winged helix DNA-binding domain"/>
    <property type="match status" value="1"/>
</dbReference>
<dbReference type="InterPro" id="IPR019153">
    <property type="entry name" value="DDRGK_dom-contain"/>
</dbReference>
<dbReference type="InterPro" id="IPR050899">
    <property type="entry name" value="DDRGK_domain-containing"/>
</dbReference>
<dbReference type="InterPro" id="IPR036388">
    <property type="entry name" value="WH-like_DNA-bd_sf"/>
</dbReference>
<dbReference type="InterPro" id="IPR036390">
    <property type="entry name" value="WH_DNA-bd_sf"/>
</dbReference>
<dbReference type="PANTHER" id="PTHR48176">
    <property type="entry name" value="DDRGK DOMAIN-CONTAINING PROTEIN 1"/>
    <property type="match status" value="1"/>
</dbReference>
<dbReference type="PANTHER" id="PTHR48176:SF1">
    <property type="entry name" value="DDRGK DOMAIN-CONTAINING PROTEIN 1"/>
    <property type="match status" value="1"/>
</dbReference>
<dbReference type="Pfam" id="PF09756">
    <property type="entry name" value="DDRGK"/>
    <property type="match status" value="1"/>
</dbReference>
<dbReference type="SMART" id="SM01128">
    <property type="entry name" value="DDRGK"/>
    <property type="match status" value="1"/>
</dbReference>
<dbReference type="SUPFAM" id="SSF46785">
    <property type="entry name" value="Winged helix' DNA-binding domain"/>
    <property type="match status" value="1"/>
</dbReference>
<comment type="function">
    <text evidence="1 2">Component of the UFM1 ribosome E3 ligase (UREL) complex, a multiprotein complex that catalyzes ufmylation of endoplasmic reticulum-docked proteins. The UREL complex plays a key role in ribosome recycling by mediating mono-ufmylation of the RPL26/uL24 subunit of the 60S ribosome following ribosome dissociation: ufmylation weakens the junction between post-termination 60S subunits and SEC61 translocons, promoting release and recycling of the large ribosomal subunit from the endoplasmic reticulum membrane. Ufmylation of RPL26/uL24 and subsequent 60S ribosome recycling either take place after normal termination of translation or after ribosome stalling during cotranslational translocation at the endoplasmic reticulum. Within the UREL complex, DDRGK1 tethers the complex to the endoplasmic reticulum membrane to restrict its activity to endoplasmic reticulum-docked ribosomes and acts as an ufmylation 'reader': following RPL26/uL24 ufmylation, DDRGK1 specifically binds to ufmylated RPL26/uL24 via its UFIM motif, resulting in stable association between the 60S ribosome and the UREL complex, followed by dissociation of the 60S ribosome subunit from the endoplasmic reticulum membrane. The UREL complex is also involved in reticulophagy in response to endoplasmic reticulum stress by promoting ufmylation of proteins such as CYB5R3 and RPN1, thereby promoting lysosomal degradation of ufmylated proteins. Ufmylation-dependent reticulophagy inhibits the unfolded protein response (UPR) by regulating ERN1/IRE1-alpha stability (By similarity). Acts as a regulator of immunity by promoting differentiation of B-cells into plasma cells: acts by promoting expansion of the endoplasmic reticulum and regulating the unfolded protein response (UPR) (By similarity). May also be required for TRIP4 ufmylation. May play a role in NF-kappa-B-mediated transcription through regulation of the phosphorylation and the degradation of NFKBIA, the inhibitor of NF-kappa-B. Plays a role in cartilage development through SOX9, inhibiting the ubiquitin-mediated proteasomal degradation of this transcriptional regulator (By similarity). Required for stabilization and ufmylation of ATG9A (By similarity).</text>
</comment>
<comment type="subunit">
    <text evidence="2">Component of the UFM1 ribosome E3 ligase (UREL) complex, composed of UFL1, DDRGK1 and CDK5RAP3. Interacts with (unphosphorylated) ERN1/IRE1-alpha; interaction is dependent on UFM1 and takes place in response to endoplasmic reticulum stress, regulating ERN1/IRE1-alpha stability. Interacts with NFKBIA. Interacts with SOX9.</text>
</comment>
<comment type="subcellular location">
    <subcellularLocation>
        <location evidence="2">Endoplasmic reticulum membrane</location>
        <topology evidence="2">Single-pass membrane protein</topology>
    </subcellularLocation>
</comment>
<comment type="domain">
    <text evidence="2">The UFM1-interacting motif (UFIM) specifically recognizes and binds ufmylated RPL26/uL24, resulting in stable association between the 60S ribosome and the UREL complex.</text>
</comment>
<comment type="PTM">
    <text evidence="2">Ubiquitinated. Ubiquitination probably triggers proteasomal degradation and is negatively regulated by UFL1, the enzyme involved in the ufmylation of DDRGK1.</text>
</comment>
<comment type="PTM">
    <text evidence="2">Ufmylated; conjugated to ubiquitin-like protein UFM1, probably at Lys-266 by UFL1. The relevance of ufmylation is however unclear: as DDRGK1 acts as a substrate adapter for ufmylation, it is uncertain whether ufmylation is a collateral effect of the ufmylation process or whether it is required to regulate its activity.</text>
</comment>
<comment type="similarity">
    <text evidence="4">Belongs to the DDRGK1 family.</text>
</comment>
<evidence type="ECO:0000250" key="1">
    <source>
        <dbReference type="UniProtKB" id="Q80WW9"/>
    </source>
</evidence>
<evidence type="ECO:0000250" key="2">
    <source>
        <dbReference type="UniProtKB" id="Q96HY6"/>
    </source>
</evidence>
<evidence type="ECO:0000256" key="3">
    <source>
        <dbReference type="SAM" id="MobiDB-lite"/>
    </source>
</evidence>
<evidence type="ECO:0000305" key="4"/>
<sequence>MVSPVVYLVVAALLVGLILFLTRGRGRAAAAAQEPLHNEEVPAAAGRVARPQPLEPEEQRAAGRPRRRRDLGSRLQAQRRAQRVAWADENEEEAIIQAQEEEDIEKPVETHLSGKIGAKKLRKLEEKQARKAQREAEEAEREERKRLESQREAEWKKEEERLRLEEEQKEEEERKAQEEQAQREHEEYLKLKETFVVVEEGVGETMTEEQSHSFLAEFINYIKQSKVVLLEDLASQVGLRTQDTINRIQDLLAEGTLTGVIDDRGKFIYITPEELAAVANFIRQRGRVSITELAQASNSLIAWGRETPAQAPA</sequence>
<accession>Q1LZB0</accession>
<gene>
    <name evidence="2" type="primary">DDRGK1</name>
</gene>
<organism>
    <name type="scientific">Bos taurus</name>
    <name type="common">Bovine</name>
    <dbReference type="NCBI Taxonomy" id="9913"/>
    <lineage>
        <taxon>Eukaryota</taxon>
        <taxon>Metazoa</taxon>
        <taxon>Chordata</taxon>
        <taxon>Craniata</taxon>
        <taxon>Vertebrata</taxon>
        <taxon>Euteleostomi</taxon>
        <taxon>Mammalia</taxon>
        <taxon>Eutheria</taxon>
        <taxon>Laurasiatheria</taxon>
        <taxon>Artiodactyla</taxon>
        <taxon>Ruminantia</taxon>
        <taxon>Pecora</taxon>
        <taxon>Bovidae</taxon>
        <taxon>Bovinae</taxon>
        <taxon>Bos</taxon>
    </lineage>
</organism>